<organism>
    <name type="scientific">Streptococcus mitis</name>
    <dbReference type="NCBI Taxonomy" id="28037"/>
    <lineage>
        <taxon>Bacteria</taxon>
        <taxon>Bacillati</taxon>
        <taxon>Bacillota</taxon>
        <taxon>Bacilli</taxon>
        <taxon>Lactobacillales</taxon>
        <taxon>Streptococcaceae</taxon>
        <taxon>Streptococcus</taxon>
        <taxon>Streptococcus mitis group</taxon>
    </lineage>
</organism>
<comment type="function">
    <text>Acts as a pheromone, induces cells to develop competence for genetic transformation.</text>
</comment>
<comment type="subcellular location">
    <subcellularLocation>
        <location>Secreted</location>
    </subcellularLocation>
</comment>
<comment type="similarity">
    <text evidence="2">Belongs to the ComC family.</text>
</comment>
<feature type="propeptide" id="PRO_0000005875" evidence="1">
    <location>
        <begin position="1"/>
        <end position="24"/>
    </location>
</feature>
<feature type="peptide" id="PRO_0000005876" description="Competence-stimulating peptide">
    <location>
        <begin position="25"/>
        <end position="40"/>
    </location>
</feature>
<sequence>MKNTVNLDKFVELKEKDLQNIQGGEIRQTHNIFFNFFKRR</sequence>
<evidence type="ECO:0000255" key="1"/>
<evidence type="ECO:0000305" key="2"/>
<gene>
    <name type="primary">comC</name>
</gene>
<keyword id="KW-0178">Competence</keyword>
<keyword id="KW-0588">Pheromone</keyword>
<keyword id="KW-0964">Secreted</keyword>
<protein>
    <recommendedName>
        <fullName>Competence-stimulating peptide</fullName>
        <shortName>CSP</shortName>
    </recommendedName>
</protein>
<proteinExistence type="inferred from homology"/>
<accession>O33675</accession>
<dbReference type="EMBL" id="AJ000875">
    <property type="protein sequence ID" value="CAA04365.1"/>
    <property type="molecule type" value="Genomic_DNA"/>
</dbReference>
<dbReference type="RefSeq" id="WP_004238992.1">
    <property type="nucleotide sequence ID" value="NZ_UHFS01000002.1"/>
</dbReference>
<dbReference type="OrthoDB" id="2228515at2"/>
<dbReference type="GO" id="GO:0005576">
    <property type="term" value="C:extracellular region"/>
    <property type="evidence" value="ECO:0007669"/>
    <property type="project" value="UniProtKB-SubCell"/>
</dbReference>
<dbReference type="GO" id="GO:0005186">
    <property type="term" value="F:pheromone activity"/>
    <property type="evidence" value="ECO:0007669"/>
    <property type="project" value="UniProtKB-KW"/>
</dbReference>
<dbReference type="GO" id="GO:0030420">
    <property type="term" value="P:establishment of competence for transformation"/>
    <property type="evidence" value="ECO:0007669"/>
    <property type="project" value="UniProtKB-KW"/>
</dbReference>
<dbReference type="InterPro" id="IPR010133">
    <property type="entry name" value="Bacteriocin_signal_seq"/>
</dbReference>
<dbReference type="InterPro" id="IPR004288">
    <property type="entry name" value="Competence_ComC"/>
</dbReference>
<dbReference type="NCBIfam" id="TIGR01847">
    <property type="entry name" value="bacteriocin_sig"/>
    <property type="match status" value="1"/>
</dbReference>
<dbReference type="NCBIfam" id="NF033214">
    <property type="entry name" value="ComC_Streptocco"/>
    <property type="match status" value="1"/>
</dbReference>
<dbReference type="Pfam" id="PF03047">
    <property type="entry name" value="ComC"/>
    <property type="match status" value="1"/>
</dbReference>
<name>CSP4_STRMT</name>
<reference key="1">
    <citation type="journal article" date="1997" name="J. Bacteriol.">
        <title>Natural competence in the genus Streptococcus: evidence that streptococci can change pherotype by interspecies recombinational exchanges.</title>
        <authorList>
            <person name="Haevarstein L.S."/>
            <person name="Hakenbeck R."/>
            <person name="Gaustad P."/>
        </authorList>
    </citation>
    <scope>NUCLEOTIDE SEQUENCE [GENOMIC DNA]</scope>
    <source>
        <strain>ATCC 49456 / DSM 12643 / LMG 14557 / NCTC 12261</strain>
    </source>
</reference>